<sequence>MAAKDRIQAIKQMVANDKKVTVSNLSGIFQVTEETIRRDLEKLEDEGFLTRTYGGAVLNTAMLTENIHFYKRASSFYEEKQLIARKALPFIDNKTTMAADSSSTVMELLKLLQDRSGLTLLTNSAEAIHVLAQSEIKVVSTGGELNKNTLSLQGRITKEIIRRYHVDIMVMSCKGLDINSGALDSNEAEAEIKKTMIRQATEVALLVDHSKFDRKAFVQLADFSHINYIITDKSPGAEWIAFCKDNNIQLVW</sequence>
<keyword id="KW-0238">DNA-binding</keyword>
<keyword id="KW-1185">Reference proteome</keyword>
<keyword id="KW-0804">Transcription</keyword>
<keyword id="KW-0805">Transcription regulation</keyword>
<gene>
    <name type="primary">ydjF</name>
    <name type="ordered locus">b1770</name>
    <name type="ordered locus">JW1759</name>
</gene>
<evidence type="ECO:0000255" key="1">
    <source>
        <dbReference type="PROSITE-ProRule" id="PRU00349"/>
    </source>
</evidence>
<organism>
    <name type="scientific">Escherichia coli (strain K12)</name>
    <dbReference type="NCBI Taxonomy" id="83333"/>
    <lineage>
        <taxon>Bacteria</taxon>
        <taxon>Pseudomonadati</taxon>
        <taxon>Pseudomonadota</taxon>
        <taxon>Gammaproteobacteria</taxon>
        <taxon>Enterobacterales</taxon>
        <taxon>Enterobacteriaceae</taxon>
        <taxon>Escherichia</taxon>
    </lineage>
</organism>
<reference key="1">
    <citation type="journal article" date="1996" name="DNA Res.">
        <title>A 570-kb DNA sequence of the Escherichia coli K-12 genome corresponding to the 28.0-40.1 min region on the linkage map.</title>
        <authorList>
            <person name="Aiba H."/>
            <person name="Baba T."/>
            <person name="Fujita K."/>
            <person name="Hayashi K."/>
            <person name="Inada T."/>
            <person name="Isono K."/>
            <person name="Itoh T."/>
            <person name="Kasai H."/>
            <person name="Kashimoto K."/>
            <person name="Kimura S."/>
            <person name="Kitakawa M."/>
            <person name="Kitagawa M."/>
            <person name="Makino K."/>
            <person name="Miki T."/>
            <person name="Mizobuchi K."/>
            <person name="Mori H."/>
            <person name="Mori T."/>
            <person name="Motomura K."/>
            <person name="Nakade S."/>
            <person name="Nakamura Y."/>
            <person name="Nashimoto H."/>
            <person name="Nishio Y."/>
            <person name="Oshima T."/>
            <person name="Saito N."/>
            <person name="Sampei G."/>
            <person name="Seki Y."/>
            <person name="Sivasundaram S."/>
            <person name="Tagami H."/>
            <person name="Takeda J."/>
            <person name="Takemoto K."/>
            <person name="Takeuchi Y."/>
            <person name="Wada C."/>
            <person name="Yamamoto Y."/>
            <person name="Horiuchi T."/>
        </authorList>
    </citation>
    <scope>NUCLEOTIDE SEQUENCE [LARGE SCALE GENOMIC DNA]</scope>
    <source>
        <strain>K12 / W3110 / ATCC 27325 / DSM 5911</strain>
    </source>
</reference>
<reference key="2">
    <citation type="journal article" date="1997" name="Science">
        <title>The complete genome sequence of Escherichia coli K-12.</title>
        <authorList>
            <person name="Blattner F.R."/>
            <person name="Plunkett G. III"/>
            <person name="Bloch C.A."/>
            <person name="Perna N.T."/>
            <person name="Burland V."/>
            <person name="Riley M."/>
            <person name="Collado-Vides J."/>
            <person name="Glasner J.D."/>
            <person name="Rode C.K."/>
            <person name="Mayhew G.F."/>
            <person name="Gregor J."/>
            <person name="Davis N.W."/>
            <person name="Kirkpatrick H.A."/>
            <person name="Goeden M.A."/>
            <person name="Rose D.J."/>
            <person name="Mau B."/>
            <person name="Shao Y."/>
        </authorList>
    </citation>
    <scope>NUCLEOTIDE SEQUENCE [LARGE SCALE GENOMIC DNA]</scope>
    <source>
        <strain>K12 / MG1655 / ATCC 47076</strain>
    </source>
</reference>
<reference key="3">
    <citation type="journal article" date="2006" name="Mol. Syst. Biol.">
        <title>Highly accurate genome sequences of Escherichia coli K-12 strains MG1655 and W3110.</title>
        <authorList>
            <person name="Hayashi K."/>
            <person name="Morooka N."/>
            <person name="Yamamoto Y."/>
            <person name="Fujita K."/>
            <person name="Isono K."/>
            <person name="Choi S."/>
            <person name="Ohtsubo E."/>
            <person name="Baba T."/>
            <person name="Wanner B.L."/>
            <person name="Mori H."/>
            <person name="Horiuchi T."/>
        </authorList>
    </citation>
    <scope>NUCLEOTIDE SEQUENCE [LARGE SCALE GENOMIC DNA]</scope>
    <source>
        <strain>K12 / W3110 / ATCC 27325 / DSM 5911</strain>
    </source>
</reference>
<accession>P77721</accession>
<feature type="chain" id="PRO_0000050272" description="Uncharacterized HTH-type transcriptional regulator YdjF">
    <location>
        <begin position="1"/>
        <end position="252"/>
    </location>
</feature>
<feature type="domain" description="HTH deoR-type" evidence="1">
    <location>
        <begin position="3"/>
        <end position="58"/>
    </location>
</feature>
<feature type="DNA-binding region" description="H-T-H motif" evidence="1">
    <location>
        <begin position="20"/>
        <end position="39"/>
    </location>
</feature>
<protein>
    <recommendedName>
        <fullName>Uncharacterized HTH-type transcriptional regulator YdjF</fullName>
    </recommendedName>
</protein>
<name>YDJF_ECOLI</name>
<proteinExistence type="evidence at protein level"/>
<dbReference type="EMBL" id="U00096">
    <property type="protein sequence ID" value="AAC74840.1"/>
    <property type="molecule type" value="Genomic_DNA"/>
</dbReference>
<dbReference type="EMBL" id="AP009048">
    <property type="protein sequence ID" value="BAA15561.1"/>
    <property type="molecule type" value="Genomic_DNA"/>
</dbReference>
<dbReference type="PIR" id="B64937">
    <property type="entry name" value="B64937"/>
</dbReference>
<dbReference type="RefSeq" id="NP_416284.1">
    <property type="nucleotide sequence ID" value="NC_000913.3"/>
</dbReference>
<dbReference type="RefSeq" id="WP_000719096.1">
    <property type="nucleotide sequence ID" value="NZ_SSZK01000001.1"/>
</dbReference>
<dbReference type="SMR" id="P77721"/>
<dbReference type="BioGRID" id="4261174">
    <property type="interactions" value="125"/>
</dbReference>
<dbReference type="DIP" id="DIP-11769N"/>
<dbReference type="FunCoup" id="P77721">
    <property type="interactions" value="33"/>
</dbReference>
<dbReference type="IntAct" id="P77721">
    <property type="interactions" value="17"/>
</dbReference>
<dbReference type="STRING" id="511145.b1770"/>
<dbReference type="jPOST" id="P77721"/>
<dbReference type="PaxDb" id="511145-b1770"/>
<dbReference type="EnsemblBacteria" id="AAC74840">
    <property type="protein sequence ID" value="AAC74840"/>
    <property type="gene ID" value="b1770"/>
</dbReference>
<dbReference type="GeneID" id="946272"/>
<dbReference type="KEGG" id="ecj:JW1759"/>
<dbReference type="KEGG" id="eco:b1770"/>
<dbReference type="KEGG" id="ecoc:C3026_10105"/>
<dbReference type="PATRIC" id="fig|1411691.4.peg.484"/>
<dbReference type="EchoBASE" id="EB3255"/>
<dbReference type="eggNOG" id="COG1349">
    <property type="taxonomic scope" value="Bacteria"/>
</dbReference>
<dbReference type="HOGENOM" id="CLU_060699_1_4_6"/>
<dbReference type="InParanoid" id="P77721"/>
<dbReference type="OMA" id="TAWYMAS"/>
<dbReference type="OrthoDB" id="5685843at2"/>
<dbReference type="PhylomeDB" id="P77721"/>
<dbReference type="BioCyc" id="EcoCyc:G6957-MONOMER"/>
<dbReference type="PRO" id="PR:P77721"/>
<dbReference type="Proteomes" id="UP000000625">
    <property type="component" value="Chromosome"/>
</dbReference>
<dbReference type="GO" id="GO:0000987">
    <property type="term" value="F:cis-regulatory region sequence-specific DNA binding"/>
    <property type="evidence" value="ECO:0000318"/>
    <property type="project" value="GO_Central"/>
</dbReference>
<dbReference type="GO" id="GO:0098531">
    <property type="term" value="F:ligand-modulated transcription factor activity"/>
    <property type="evidence" value="ECO:0000318"/>
    <property type="project" value="GO_Central"/>
</dbReference>
<dbReference type="GO" id="GO:0006355">
    <property type="term" value="P:regulation of DNA-templated transcription"/>
    <property type="evidence" value="ECO:0000318"/>
    <property type="project" value="GO_Central"/>
</dbReference>
<dbReference type="Gene3D" id="3.40.50.1360">
    <property type="match status" value="1"/>
</dbReference>
<dbReference type="Gene3D" id="1.10.10.10">
    <property type="entry name" value="Winged helix-like DNA-binding domain superfamily/Winged helix DNA-binding domain"/>
    <property type="match status" value="1"/>
</dbReference>
<dbReference type="InterPro" id="IPR050313">
    <property type="entry name" value="Carb_Metab_HTH_regulators"/>
</dbReference>
<dbReference type="InterPro" id="IPR014036">
    <property type="entry name" value="DeoR-like_C"/>
</dbReference>
<dbReference type="InterPro" id="IPR001034">
    <property type="entry name" value="DeoR_HTH"/>
</dbReference>
<dbReference type="InterPro" id="IPR037171">
    <property type="entry name" value="NagB/RpiA_transferase-like"/>
</dbReference>
<dbReference type="InterPro" id="IPR018356">
    <property type="entry name" value="Tscrpt_reg_HTH_DeoR_CS"/>
</dbReference>
<dbReference type="InterPro" id="IPR036388">
    <property type="entry name" value="WH-like_DNA-bd_sf"/>
</dbReference>
<dbReference type="InterPro" id="IPR036390">
    <property type="entry name" value="WH_DNA-bd_sf"/>
</dbReference>
<dbReference type="PANTHER" id="PTHR30363:SF44">
    <property type="entry name" value="AGA OPERON TRANSCRIPTIONAL REPRESSOR-RELATED"/>
    <property type="match status" value="1"/>
</dbReference>
<dbReference type="PANTHER" id="PTHR30363">
    <property type="entry name" value="HTH-TYPE TRANSCRIPTIONAL REGULATOR SRLR-RELATED"/>
    <property type="match status" value="1"/>
</dbReference>
<dbReference type="Pfam" id="PF00455">
    <property type="entry name" value="DeoRC"/>
    <property type="match status" value="1"/>
</dbReference>
<dbReference type="Pfam" id="PF08220">
    <property type="entry name" value="HTH_DeoR"/>
    <property type="match status" value="1"/>
</dbReference>
<dbReference type="PRINTS" id="PR00037">
    <property type="entry name" value="HTHLACR"/>
</dbReference>
<dbReference type="SMART" id="SM01134">
    <property type="entry name" value="DeoRC"/>
    <property type="match status" value="1"/>
</dbReference>
<dbReference type="SMART" id="SM00420">
    <property type="entry name" value="HTH_DEOR"/>
    <property type="match status" value="1"/>
</dbReference>
<dbReference type="SUPFAM" id="SSF100950">
    <property type="entry name" value="NagB/RpiA/CoA transferase-like"/>
    <property type="match status" value="1"/>
</dbReference>
<dbReference type="SUPFAM" id="SSF46785">
    <property type="entry name" value="Winged helix' DNA-binding domain"/>
    <property type="match status" value="1"/>
</dbReference>
<dbReference type="PROSITE" id="PS00894">
    <property type="entry name" value="HTH_DEOR_1"/>
    <property type="match status" value="1"/>
</dbReference>
<dbReference type="PROSITE" id="PS51000">
    <property type="entry name" value="HTH_DEOR_2"/>
    <property type="match status" value="1"/>
</dbReference>
<comment type="interaction">
    <interactant intactId="EBI-545197">
        <id>P77721</id>
    </interactant>
    <interactant intactId="EBI-542856">
        <id>P0A9P0</id>
        <label>lpdA</label>
    </interactant>
    <organismsDiffer>false</organismsDiffer>
    <experiments>2</experiments>
</comment>